<protein>
    <recommendedName>
        <fullName>C-type lectin lectoxin-Enh5</fullName>
        <shortName>CTL</shortName>
    </recommendedName>
</protein>
<sequence>MGQFTVVSLGLLAVFLSLSGAKGDNCPANWISRNGVCNKLFPDRKTWLEAEMYCRALKPGCHLASLHRDSDSTVLAWYISDHFKGAGHVWIGLRDTNRKRTWKWSDRTSTNYFSWNQGEPNNVQDNENCVHLWAPSGYLKWNDEPCASLHPFICQYKL</sequence>
<name>LECM5_PSEPL</name>
<organism>
    <name type="scientific">Pseudoferania polylepis</name>
    <name type="common">Macleay's water snake</name>
    <name type="synonym">Enhydris polylepis</name>
    <dbReference type="NCBI Taxonomy" id="338839"/>
    <lineage>
        <taxon>Eukaryota</taxon>
        <taxon>Metazoa</taxon>
        <taxon>Chordata</taxon>
        <taxon>Craniata</taxon>
        <taxon>Vertebrata</taxon>
        <taxon>Euteleostomi</taxon>
        <taxon>Lepidosauria</taxon>
        <taxon>Squamata</taxon>
        <taxon>Bifurcata</taxon>
        <taxon>Unidentata</taxon>
        <taxon>Episquamata</taxon>
        <taxon>Toxicofera</taxon>
        <taxon>Serpentes</taxon>
        <taxon>Colubroidea</taxon>
        <taxon>Homalopsidae</taxon>
        <taxon>Pseudoferania</taxon>
    </lineage>
</organism>
<evidence type="ECO:0000250" key="1"/>
<evidence type="ECO:0000255" key="2"/>
<evidence type="ECO:0000255" key="3">
    <source>
        <dbReference type="PROSITE-ProRule" id="PRU00040"/>
    </source>
</evidence>
<evidence type="ECO:0000305" key="4"/>
<keyword id="KW-0106">Calcium</keyword>
<keyword id="KW-1015">Disulfide bond</keyword>
<keyword id="KW-0348">Hemagglutinin</keyword>
<keyword id="KW-0430">Lectin</keyword>
<keyword id="KW-0479">Metal-binding</keyword>
<keyword id="KW-0964">Secreted</keyword>
<keyword id="KW-0732">Signal</keyword>
<keyword id="KW-0800">Toxin</keyword>
<proteinExistence type="evidence at transcript level"/>
<dbReference type="EMBL" id="EU029693">
    <property type="protein sequence ID" value="ABU68493.1"/>
    <property type="molecule type" value="mRNA"/>
</dbReference>
<dbReference type="SMR" id="A7X3X8"/>
<dbReference type="GO" id="GO:0005576">
    <property type="term" value="C:extracellular region"/>
    <property type="evidence" value="ECO:0007669"/>
    <property type="project" value="UniProtKB-SubCell"/>
</dbReference>
<dbReference type="GO" id="GO:0030246">
    <property type="term" value="F:carbohydrate binding"/>
    <property type="evidence" value="ECO:0007669"/>
    <property type="project" value="UniProtKB-KW"/>
</dbReference>
<dbReference type="GO" id="GO:0046872">
    <property type="term" value="F:metal ion binding"/>
    <property type="evidence" value="ECO:0007669"/>
    <property type="project" value="UniProtKB-KW"/>
</dbReference>
<dbReference type="GO" id="GO:0090729">
    <property type="term" value="F:toxin activity"/>
    <property type="evidence" value="ECO:0007669"/>
    <property type="project" value="UniProtKB-KW"/>
</dbReference>
<dbReference type="FunFam" id="3.10.100.10:FF:000015">
    <property type="entry name" value="C-type lectin Cal"/>
    <property type="match status" value="1"/>
</dbReference>
<dbReference type="Gene3D" id="3.10.100.10">
    <property type="entry name" value="Mannose-Binding Protein A, subunit A"/>
    <property type="match status" value="1"/>
</dbReference>
<dbReference type="InterPro" id="IPR001304">
    <property type="entry name" value="C-type_lectin-like"/>
</dbReference>
<dbReference type="InterPro" id="IPR016186">
    <property type="entry name" value="C-type_lectin-like/link_sf"/>
</dbReference>
<dbReference type="InterPro" id="IPR050111">
    <property type="entry name" value="C-type_lectin/snaclec_domain"/>
</dbReference>
<dbReference type="InterPro" id="IPR018378">
    <property type="entry name" value="C-type_lectin_CS"/>
</dbReference>
<dbReference type="InterPro" id="IPR016187">
    <property type="entry name" value="CTDL_fold"/>
</dbReference>
<dbReference type="PANTHER" id="PTHR22803">
    <property type="entry name" value="MANNOSE, PHOSPHOLIPASE, LECTIN RECEPTOR RELATED"/>
    <property type="match status" value="1"/>
</dbReference>
<dbReference type="Pfam" id="PF00059">
    <property type="entry name" value="Lectin_C"/>
    <property type="match status" value="1"/>
</dbReference>
<dbReference type="PRINTS" id="PR01504">
    <property type="entry name" value="PNCREATITSAP"/>
</dbReference>
<dbReference type="SMART" id="SM00034">
    <property type="entry name" value="CLECT"/>
    <property type="match status" value="1"/>
</dbReference>
<dbReference type="SUPFAM" id="SSF56436">
    <property type="entry name" value="C-type lectin-like"/>
    <property type="match status" value="1"/>
</dbReference>
<dbReference type="PROSITE" id="PS00615">
    <property type="entry name" value="C_TYPE_LECTIN_1"/>
    <property type="match status" value="1"/>
</dbReference>
<dbReference type="PROSITE" id="PS50041">
    <property type="entry name" value="C_TYPE_LECTIN_2"/>
    <property type="match status" value="1"/>
</dbReference>
<feature type="signal peptide" evidence="2">
    <location>
        <begin position="1"/>
        <end position="23"/>
    </location>
</feature>
<feature type="chain" id="PRO_0000356311" description="C-type lectin lectoxin-Enh5">
    <location>
        <begin position="24"/>
        <end position="158"/>
    </location>
</feature>
<feature type="domain" description="C-type lectin" evidence="3">
    <location>
        <begin position="33"/>
        <end position="155"/>
    </location>
</feature>
<feature type="short sequence motif" description="Mannose-binding">
    <location>
        <begin position="119"/>
        <end position="121"/>
    </location>
</feature>
<feature type="binding site" evidence="1">
    <location>
        <position position="127"/>
    </location>
    <ligand>
        <name>Ca(2+)</name>
        <dbReference type="ChEBI" id="CHEBI:29108"/>
    </ligand>
</feature>
<feature type="binding site" evidence="1">
    <location>
        <position position="142"/>
    </location>
    <ligand>
        <name>Ca(2+)</name>
        <dbReference type="ChEBI" id="CHEBI:29108"/>
    </ligand>
</feature>
<feature type="binding site" evidence="1">
    <location>
        <position position="143"/>
    </location>
    <ligand>
        <name>Ca(2+)</name>
        <dbReference type="ChEBI" id="CHEBI:29108"/>
    </ligand>
</feature>
<feature type="disulfide bond" evidence="3">
    <location>
        <begin position="26"/>
        <end position="37"/>
    </location>
</feature>
<feature type="disulfide bond" evidence="3">
    <location>
        <begin position="54"/>
        <end position="154"/>
    </location>
</feature>
<feature type="disulfide bond" evidence="3">
    <location>
        <begin position="129"/>
        <end position="146"/>
    </location>
</feature>
<comment type="function">
    <text evidence="1">Mannose-binding lectin which recognizes specific carbohydrate structures and agglutinates a variety of animal cells by binding to cell-surface glycoproteins and glycolipids. May be a calcium-dependent lectin (By similarity).</text>
</comment>
<comment type="subcellular location">
    <subcellularLocation>
        <location evidence="1">Secreted</location>
    </subcellularLocation>
</comment>
<comment type="tissue specificity">
    <text>Expressed by the venom gland.</text>
</comment>
<comment type="similarity">
    <text evidence="4">Belongs to the true venom lectin family.</text>
</comment>
<reference key="1">
    <citation type="journal article" date="2008" name="Mol. Cell. Proteomics">
        <title>Evolution of an arsenal: structural and functional diversification of the venom system in the advanced snakes (Caenophidia).</title>
        <authorList>
            <person name="Fry B.G."/>
            <person name="Scheib H."/>
            <person name="van der Weerd L."/>
            <person name="Young B."/>
            <person name="McNaughtan J."/>
            <person name="Ramjan S.F.R."/>
            <person name="Vidal N."/>
            <person name="Poelmann R.E."/>
            <person name="Norman J.A."/>
        </authorList>
    </citation>
    <scope>NUCLEOTIDE SEQUENCE [MRNA]</scope>
    <source>
        <tissue>Venom gland</tissue>
    </source>
</reference>
<accession>A7X3X8</accession>